<comment type="function">
    <text evidence="1">One of the extrinsic, lumenal subunits of photosystem II (PSII). PSII is a light-driven water plastoquinone oxidoreductase, using light energy to abstract electrons from H(2)O, generating a proton gradient subsequently used for ATP formation. The extrinsic proteins stabilize the structure of photosystem II oxygen-evolving complex (OEC), the ion environment of oxygen evolution and protect the OEC against heat-induced inactivation. Low-potential cytochrome c that plays a role in the OEC of PSII.</text>
</comment>
<comment type="cofactor">
    <cofactor evidence="1">
        <name>heme c</name>
        <dbReference type="ChEBI" id="CHEBI:61717"/>
    </cofactor>
    <text evidence="1">Binds 1 heme c group covalently per subunit.</text>
</comment>
<comment type="subunit">
    <text evidence="2">PSII is composed of 1 copy each of membrane proteins PsbA, PsbB, PsbC, PsbD, PsbE, PsbF, PsbH, PsbI, PsbJ, PsbK, PsbL, PsbM, PsbT, PsbX, PsbY, Psb30/Ycf12, peripheral proteins PsbO, CyanoQ (PsbQ), PsbU, PsbV and a large number of cofactors. It forms dimeric complexes.</text>
</comment>
<comment type="subcellular location">
    <subcellularLocation>
        <location evidence="1">Cellular thylakoid membrane</location>
        <topology evidence="1">Peripheral membrane protein</topology>
        <orientation evidence="1">Lumenal side</orientation>
    </subcellularLocation>
    <text evidence="1">Associated with photosystem II at the lumenal side of the thylakoid membrane.</text>
</comment>
<comment type="similarity">
    <text evidence="1">Belongs to the cytochrome c family. PsbV subfamily.</text>
</comment>
<sequence>MASLFASLGRSLIKLLIVLPVIIGLSISSPAMAAQWDAETLTVPAGSGGQQVTFSESEIKSASKLFKSNCATCHNQGVTKTNQNVGLDLEALSLASPARDNVDGLVEFLKNPMSYDGEYSIADTHPGISSSDVYVQMRTLNDEDLRLIAGYILTAEKVQGDQWGGGKIYF</sequence>
<protein>
    <recommendedName>
        <fullName evidence="1">Photosystem II extrinsic protein V</fullName>
        <shortName evidence="1">PsbV</shortName>
    </recommendedName>
    <alternativeName>
        <fullName evidence="1">Cytochrome c-550</fullName>
    </alternativeName>
    <alternativeName>
        <fullName evidence="1">Cytochrome c550</fullName>
    </alternativeName>
    <alternativeName>
        <fullName evidence="1">Low-potential cytochrome c</fullName>
    </alternativeName>
</protein>
<keyword id="KW-0249">Electron transport</keyword>
<keyword id="KW-0349">Heme</keyword>
<keyword id="KW-0408">Iron</keyword>
<keyword id="KW-0472">Membrane</keyword>
<keyword id="KW-0479">Metal-binding</keyword>
<keyword id="KW-0602">Photosynthesis</keyword>
<keyword id="KW-0604">Photosystem II</keyword>
<keyword id="KW-0732">Signal</keyword>
<keyword id="KW-0793">Thylakoid</keyword>
<keyword id="KW-0813">Transport</keyword>
<gene>
    <name evidence="1" type="primary">psbV</name>
    <name type="ordered locus">P9303_05311</name>
</gene>
<organism>
    <name type="scientific">Prochlorococcus marinus (strain MIT 9303)</name>
    <dbReference type="NCBI Taxonomy" id="59922"/>
    <lineage>
        <taxon>Bacteria</taxon>
        <taxon>Bacillati</taxon>
        <taxon>Cyanobacteriota</taxon>
        <taxon>Cyanophyceae</taxon>
        <taxon>Synechococcales</taxon>
        <taxon>Prochlorococcaceae</taxon>
        <taxon>Prochlorococcus</taxon>
    </lineage>
</organism>
<accession>A2C723</accession>
<proteinExistence type="inferred from homology"/>
<dbReference type="EMBL" id="CP000554">
    <property type="protein sequence ID" value="ABM77283.1"/>
    <property type="molecule type" value="Genomic_DNA"/>
</dbReference>
<dbReference type="SMR" id="A2C723"/>
<dbReference type="STRING" id="59922.P9303_05311"/>
<dbReference type="KEGG" id="pmf:P9303_05311"/>
<dbReference type="HOGENOM" id="CLU_104149_1_0_3"/>
<dbReference type="BioCyc" id="PMAR59922:G1G80-490-MONOMER"/>
<dbReference type="Proteomes" id="UP000002274">
    <property type="component" value="Chromosome"/>
</dbReference>
<dbReference type="GO" id="GO:0009523">
    <property type="term" value="C:photosystem II"/>
    <property type="evidence" value="ECO:0007669"/>
    <property type="project" value="UniProtKB-KW"/>
</dbReference>
<dbReference type="GO" id="GO:0031676">
    <property type="term" value="C:plasma membrane-derived thylakoid membrane"/>
    <property type="evidence" value="ECO:0007669"/>
    <property type="project" value="UniProtKB-SubCell"/>
</dbReference>
<dbReference type="GO" id="GO:0009055">
    <property type="term" value="F:electron transfer activity"/>
    <property type="evidence" value="ECO:0007669"/>
    <property type="project" value="InterPro"/>
</dbReference>
<dbReference type="GO" id="GO:0020037">
    <property type="term" value="F:heme binding"/>
    <property type="evidence" value="ECO:0007669"/>
    <property type="project" value="InterPro"/>
</dbReference>
<dbReference type="GO" id="GO:0005506">
    <property type="term" value="F:iron ion binding"/>
    <property type="evidence" value="ECO:0007669"/>
    <property type="project" value="InterPro"/>
</dbReference>
<dbReference type="GO" id="GO:0019684">
    <property type="term" value="P:photosynthesis, light reaction"/>
    <property type="evidence" value="ECO:0007669"/>
    <property type="project" value="UniProtKB-UniRule"/>
</dbReference>
<dbReference type="GO" id="GO:0022904">
    <property type="term" value="P:respiratory electron transport chain"/>
    <property type="evidence" value="ECO:0007669"/>
    <property type="project" value="InterPro"/>
</dbReference>
<dbReference type="Gene3D" id="1.10.760.10">
    <property type="entry name" value="Cytochrome c-like domain"/>
    <property type="match status" value="1"/>
</dbReference>
<dbReference type="HAMAP" id="MF_01378">
    <property type="entry name" value="PSII_Cyt550"/>
    <property type="match status" value="1"/>
</dbReference>
<dbReference type="InterPro" id="IPR009056">
    <property type="entry name" value="Cyt_c-like_dom"/>
</dbReference>
<dbReference type="InterPro" id="IPR036909">
    <property type="entry name" value="Cyt_c-like_dom_sf"/>
</dbReference>
<dbReference type="InterPro" id="IPR029490">
    <property type="entry name" value="Cytochrom_C550"/>
</dbReference>
<dbReference type="InterPro" id="IPR017851">
    <property type="entry name" value="PsbV_cyt_c550"/>
</dbReference>
<dbReference type="InterPro" id="IPR016003">
    <property type="entry name" value="PsbV_cyt_c550-like"/>
</dbReference>
<dbReference type="NCBIfam" id="TIGR03045">
    <property type="entry name" value="PS_II_C550"/>
    <property type="match status" value="1"/>
</dbReference>
<dbReference type="Pfam" id="PF14495">
    <property type="entry name" value="Cytochrom_C550"/>
    <property type="match status" value="1"/>
</dbReference>
<dbReference type="PIRSF" id="PIRSF005890">
    <property type="entry name" value="Phot_II_cyt_c550"/>
    <property type="match status" value="1"/>
</dbReference>
<dbReference type="SUPFAM" id="SSF46626">
    <property type="entry name" value="Cytochrome c"/>
    <property type="match status" value="1"/>
</dbReference>
<dbReference type="PROSITE" id="PS51007">
    <property type="entry name" value="CYTC"/>
    <property type="match status" value="1"/>
</dbReference>
<reference key="1">
    <citation type="journal article" date="2007" name="PLoS Genet.">
        <title>Patterns and implications of gene gain and loss in the evolution of Prochlorococcus.</title>
        <authorList>
            <person name="Kettler G.C."/>
            <person name="Martiny A.C."/>
            <person name="Huang K."/>
            <person name="Zucker J."/>
            <person name="Coleman M.L."/>
            <person name="Rodrigue S."/>
            <person name="Chen F."/>
            <person name="Lapidus A."/>
            <person name="Ferriera S."/>
            <person name="Johnson J."/>
            <person name="Steglich C."/>
            <person name="Church G.M."/>
            <person name="Richardson P."/>
            <person name="Chisholm S.W."/>
        </authorList>
    </citation>
    <scope>NUCLEOTIDE SEQUENCE [LARGE SCALE GENOMIC DNA]</scope>
    <source>
        <strain>MIT 9303</strain>
    </source>
</reference>
<evidence type="ECO:0000255" key="1">
    <source>
        <dbReference type="HAMAP-Rule" id="MF_01378"/>
    </source>
</evidence>
<evidence type="ECO:0000305" key="2"/>
<name>CY550_PROM3</name>
<feature type="signal peptide" evidence="1">
    <location>
        <begin position="1"/>
        <end position="33"/>
    </location>
</feature>
<feature type="chain" id="PRO_0000295599" description="Photosystem II extrinsic protein V">
    <location>
        <begin position="34"/>
        <end position="170"/>
    </location>
</feature>
<feature type="binding site" description="covalent" evidence="1">
    <location>
        <position position="70"/>
    </location>
    <ligand>
        <name>heme c</name>
        <dbReference type="ChEBI" id="CHEBI:61717"/>
    </ligand>
</feature>
<feature type="binding site" description="covalent" evidence="1">
    <location>
        <position position="73"/>
    </location>
    <ligand>
        <name>heme c</name>
        <dbReference type="ChEBI" id="CHEBI:61717"/>
    </ligand>
</feature>
<feature type="binding site" description="axial binding residue" evidence="1">
    <location>
        <position position="74"/>
    </location>
    <ligand>
        <name>heme c</name>
        <dbReference type="ChEBI" id="CHEBI:61717"/>
    </ligand>
    <ligandPart>
        <name>Fe</name>
        <dbReference type="ChEBI" id="CHEBI:18248"/>
    </ligandPart>
</feature>
<feature type="binding site" description="axial binding residue" evidence="1">
    <location>
        <position position="125"/>
    </location>
    <ligand>
        <name>heme c</name>
        <dbReference type="ChEBI" id="CHEBI:61717"/>
    </ligand>
    <ligandPart>
        <name>Fe</name>
        <dbReference type="ChEBI" id="CHEBI:18248"/>
    </ligandPart>
</feature>